<feature type="chain" id="PRO_0000250351" description="UPF0316 protein SAOUHSC_02131">
    <location>
        <begin position="1"/>
        <end position="200"/>
    </location>
</feature>
<feature type="transmembrane region" description="Helical" evidence="1">
    <location>
        <begin position="8"/>
        <end position="28"/>
    </location>
</feature>
<feature type="transmembrane region" description="Helical" evidence="1">
    <location>
        <begin position="40"/>
        <end position="60"/>
    </location>
</feature>
<feature type="transmembrane region" description="Helical" evidence="1">
    <location>
        <begin position="66"/>
        <end position="86"/>
    </location>
</feature>
<reference key="1">
    <citation type="book" date="2006" name="Gram positive pathogens, 2nd edition">
        <title>The Staphylococcus aureus NCTC 8325 genome.</title>
        <editorList>
            <person name="Fischetti V."/>
            <person name="Novick R."/>
            <person name="Ferretti J."/>
            <person name="Portnoy D."/>
            <person name="Rood J."/>
        </editorList>
        <authorList>
            <person name="Gillaspy A.F."/>
            <person name="Worrell V."/>
            <person name="Orvis J."/>
            <person name="Roe B.A."/>
            <person name="Dyer D.W."/>
            <person name="Iandolo J.J."/>
        </authorList>
    </citation>
    <scope>NUCLEOTIDE SEQUENCE [LARGE SCALE GENOMIC DNA]</scope>
    <source>
        <strain>NCTC 8325 / PS 47</strain>
    </source>
</reference>
<accession>Q2G2R9</accession>
<gene>
    <name type="ordered locus">SAOUHSC_02131</name>
</gene>
<dbReference type="EMBL" id="CP000253">
    <property type="protein sequence ID" value="ABD31179.1"/>
    <property type="molecule type" value="Genomic_DNA"/>
</dbReference>
<dbReference type="RefSeq" id="WP_000011542.1">
    <property type="nucleotide sequence ID" value="NZ_LS483365.1"/>
</dbReference>
<dbReference type="RefSeq" id="YP_500621.1">
    <property type="nucleotide sequence ID" value="NC_007795.1"/>
</dbReference>
<dbReference type="SMR" id="Q2G2R9"/>
<dbReference type="STRING" id="93061.SAOUHSC_02131"/>
<dbReference type="PaxDb" id="1280-SAXN108_2012"/>
<dbReference type="GeneID" id="3921201"/>
<dbReference type="KEGG" id="sao:SAOUHSC_02131"/>
<dbReference type="PATRIC" id="fig|93061.5.peg.1933"/>
<dbReference type="eggNOG" id="COG4843">
    <property type="taxonomic scope" value="Bacteria"/>
</dbReference>
<dbReference type="HOGENOM" id="CLU_106166_1_0_9"/>
<dbReference type="OrthoDB" id="48231at2"/>
<dbReference type="PRO" id="PR:Q2G2R9"/>
<dbReference type="Proteomes" id="UP000008816">
    <property type="component" value="Chromosome"/>
</dbReference>
<dbReference type="GO" id="GO:0005886">
    <property type="term" value="C:plasma membrane"/>
    <property type="evidence" value="ECO:0007669"/>
    <property type="project" value="UniProtKB-SubCell"/>
</dbReference>
<dbReference type="CDD" id="cd16381">
    <property type="entry name" value="YitT_C_like_1"/>
    <property type="match status" value="1"/>
</dbReference>
<dbReference type="HAMAP" id="MF_01515">
    <property type="entry name" value="UPF0316"/>
    <property type="match status" value="1"/>
</dbReference>
<dbReference type="InterPro" id="IPR019264">
    <property type="entry name" value="DUF2179"/>
</dbReference>
<dbReference type="InterPro" id="IPR044035">
    <property type="entry name" value="DUF5698"/>
</dbReference>
<dbReference type="InterPro" id="IPR022930">
    <property type="entry name" value="UPF0316"/>
</dbReference>
<dbReference type="NCBIfam" id="NF003190">
    <property type="entry name" value="PRK04164.1-1"/>
    <property type="match status" value="1"/>
</dbReference>
<dbReference type="NCBIfam" id="NF003194">
    <property type="entry name" value="PRK04164.1-5"/>
    <property type="match status" value="1"/>
</dbReference>
<dbReference type="PANTHER" id="PTHR40060">
    <property type="entry name" value="UPF0316 PROTEIN YEBE"/>
    <property type="match status" value="1"/>
</dbReference>
<dbReference type="PANTHER" id="PTHR40060:SF1">
    <property type="entry name" value="UPF0316 PROTEIN YEBE"/>
    <property type="match status" value="1"/>
</dbReference>
<dbReference type="Pfam" id="PF10035">
    <property type="entry name" value="DUF2179"/>
    <property type="match status" value="1"/>
</dbReference>
<dbReference type="Pfam" id="PF18955">
    <property type="entry name" value="DUF5698"/>
    <property type="match status" value="1"/>
</dbReference>
<evidence type="ECO:0000255" key="1">
    <source>
        <dbReference type="HAMAP-Rule" id="MF_01515"/>
    </source>
</evidence>
<sequence length="200" mass="22955">MSFVTENPWLMVLTIFIINVCYVTFLTMRTILTLKGYRYIAASVSFLEVLVYIVGLGLVMSNLDHIQNIIAYAFGFSIGIIVGMKIEEKLALGYTVVNVTSAEYELDLPNELRNLGYGVTHYAAFGRDGSRMVMQILTPRKYERKLMDTIKNLDPKAFIIAYEPRNIHGGFWTKGIRRRKLKDYEPEELESVVEHEIQSK</sequence>
<proteinExistence type="inferred from homology"/>
<organism>
    <name type="scientific">Staphylococcus aureus (strain NCTC 8325 / PS 47)</name>
    <dbReference type="NCBI Taxonomy" id="93061"/>
    <lineage>
        <taxon>Bacteria</taxon>
        <taxon>Bacillati</taxon>
        <taxon>Bacillota</taxon>
        <taxon>Bacilli</taxon>
        <taxon>Bacillales</taxon>
        <taxon>Staphylococcaceae</taxon>
        <taxon>Staphylococcus</taxon>
    </lineage>
</organism>
<keyword id="KW-1003">Cell membrane</keyword>
<keyword id="KW-0472">Membrane</keyword>
<keyword id="KW-1185">Reference proteome</keyword>
<keyword id="KW-0812">Transmembrane</keyword>
<keyword id="KW-1133">Transmembrane helix</keyword>
<protein>
    <recommendedName>
        <fullName evidence="1">UPF0316 protein SAOUHSC_02131</fullName>
    </recommendedName>
</protein>
<name>Y2131_STAA8</name>
<comment type="subcellular location">
    <subcellularLocation>
        <location evidence="1">Cell membrane</location>
        <topology evidence="1">Multi-pass membrane protein</topology>
    </subcellularLocation>
</comment>
<comment type="similarity">
    <text evidence="1">Belongs to the UPF0316 family.</text>
</comment>